<sequence length="366" mass="39550">MVSQRSLLLLLLLTLRDVDSCQGPELVRELVLAKVKALFLDALGPPAMDGEGGDPGIRRLPRRHAVGGFMHRTSEPEEEDVSQAILFPATGATCEDQPAARGLAQEAEEGLFTYVFRPSQHIRSHQVTSAQLWFHTGLGRKSTAAANSSAPLLDLLVLSSGGPMAVPVSLGQGPPRWAVLHLAASAFPLLTHPILVLLLRCPLCSCSGRPETTPFLVAHTRARAPSAGERARRSTPSVPWPWSPAALRLLQRPPEEPAAHAFCHRAALNISFQELGWDRWIVHPPSFIFHYCHGSCGMPTSDLPLPVPGVPPTPVQPLFLVPGAKPCCAALPGSMRSLRVRTTSDGGYSFKYEMVPNLITQHCACI</sequence>
<accession>Q04997</accession>
<accession>Q6GTG7</accession>
<protein>
    <recommendedName>
        <fullName>Inhibin alpha chain</fullName>
    </recommendedName>
</protein>
<feature type="signal peptide" evidence="1">
    <location>
        <begin position="1"/>
        <end position="20"/>
    </location>
</feature>
<feature type="propeptide" id="PRO_0000033688" evidence="1">
    <location>
        <begin position="21"/>
        <end position="63"/>
    </location>
</feature>
<feature type="propeptide" id="PRO_0000033689" description="Inhibin alpha N-terminal region" evidence="1">
    <location>
        <begin position="64"/>
        <end position="233"/>
    </location>
</feature>
<feature type="chain" id="PRO_0000033690" description="Inhibin alpha chain">
    <location>
        <begin position="234"/>
        <end position="366"/>
    </location>
</feature>
<feature type="site" description="Cleavage" evidence="1">
    <location>
        <begin position="63"/>
        <end position="64"/>
    </location>
</feature>
<feature type="site" description="Cleavage" evidence="1">
    <location>
        <begin position="233"/>
        <end position="234"/>
    </location>
</feature>
<feature type="glycosylation site" description="N-linked (GlcNAc...) asparagine" evidence="5">
    <location>
        <position position="147"/>
    </location>
</feature>
<feature type="glycosylation site" description="N-linked (GlcNAc...) asparagine" evidence="1">
    <location>
        <position position="269"/>
    </location>
</feature>
<feature type="disulfide bond" evidence="1">
    <location>
        <begin position="263"/>
        <end position="328"/>
    </location>
</feature>
<feature type="disulfide bond" evidence="1">
    <location>
        <begin position="292"/>
        <end position="363"/>
    </location>
</feature>
<feature type="disulfide bond" evidence="1">
    <location>
        <begin position="296"/>
        <end position="365"/>
    </location>
</feature>
<feature type="disulfide bond" description="Interchain" evidence="1">
    <location>
        <position position="327"/>
    </location>
</feature>
<feature type="sequence conflict" description="In Ref. 2; AAA39314." evidence="9" ref="2">
    <original>A</original>
    <variation>R</variation>
    <location>
        <position position="165"/>
    </location>
</feature>
<feature type="sequence conflict" description="In Ref. 1; CAA49324." evidence="9" ref="1">
    <original>G</original>
    <variation>V</variation>
    <location>
        <position position="171"/>
    </location>
</feature>
<feature type="sequence conflict" description="In Ref. 1; CAA49324." evidence="9" ref="1">
    <original>R</original>
    <variation>T</variation>
    <location>
        <position position="336"/>
    </location>
</feature>
<comment type="function">
    <text evidence="6 7 8">Inhibins and activins inhibit and activate, respectively, the secretion of follitropin by the pituitary gland. Inhibins/activins are involved in regulating a number of diverse functions such as hypothalamic and pituitary hormone secretion, gonadal hormone secretion, germ cell development and maturation, erythroid differentiation, insulin secretion, nerve cell survival, embryonic axial development or bone growth, depending on their subunit composition. Inhibins appear to oppose the functions of activins.</text>
</comment>
<comment type="function">
    <text evidence="3">Inhibin A is a dimer of alpha/INHA and beta-A/INHBA that functions as a feedback regulator in the hypothalamic-pituitary-gonadal (HPG) axis. Inhibits the secretion of FSH from the anterior pituitary gland by acting on pituitary gonadotrope cells. Antagonizes activin A by binding to the proteoglycan, betaglycan, and forming a stable complex with and, thereby, sequestering type II activin receptors while excluding type I receptor.</text>
</comment>
<comment type="function">
    <text evidence="2 4">Inhibin B is a dimer of alpha and beta-B that plays a crucial role in the regulation of the reproductive system by inhibiting the secretion of follicle-stimulating hormone (FSH) from the anterior pituitary gland. Thereby, maintains reproductive homeostasis in both males and females. Acts as a more potent suppressor of FSH release than inhibin A (By similarity). Functions as competitive receptor antagonist binding activin type II receptors with high affinity in the presence of the TGF-beta type III coreceptor/TGFBR3L (By similarity).</text>
</comment>
<comment type="subunit">
    <text evidence="2">Dimeric, linked by one or more disulfide bonds. Activin B is a dimer of alpha and beta-B. Inhibin A is a dimer of alpha and beta-A. Inhibin B is a dimer of alpha and beta-B. Interacts with TGFBR3L; this interaction regulates female fertility.</text>
</comment>
<comment type="subcellular location">
    <subcellularLocation>
        <location evidence="4">Secreted</location>
    </subcellularLocation>
</comment>
<comment type="PTM">
    <text>Proteolytic processing yields a number of bioactive forms, consisting either solely of the mature alpha chain, of the most N-terminal propeptide linked through a disulfide bond to the mature alpha chain, or of the entire proprotein.</text>
</comment>
<comment type="disruption phenotype">
    <text evidence="6">Inha deficient mice are viable but are acutely sensitive to development of gonadal sex-cord stromal tumors.</text>
</comment>
<comment type="similarity">
    <text evidence="9">Belongs to the TGF-beta family.</text>
</comment>
<reference key="1">
    <citation type="journal article" date="1993" name="Development">
        <title>Activins are expressed in preimplantation mouse embryos and in ES and EC cells and are regulated on their differentiation.</title>
        <authorList>
            <person name="Albano P.M."/>
            <person name="Groome N."/>
            <person name="Smith J.C."/>
        </authorList>
    </citation>
    <scope>NUCLEOTIDE SEQUENCE [MRNA]</scope>
</reference>
<reference key="2">
    <citation type="journal article" date="1992" name="Biochem. Biophys. Res. Commun.">
        <title>Characterization of mouse inhibin alpha gene and its promoter.</title>
        <authorList>
            <person name="Su J.G.W."/>
            <person name="Hsueh A.J.W."/>
        </authorList>
    </citation>
    <scope>NUCLEOTIDE SEQUENCE [GENOMIC DNA]</scope>
</reference>
<reference key="3">
    <citation type="submission" date="2005-07" db="EMBL/GenBank/DDBJ databases">
        <authorList>
            <person name="Mural R.J."/>
            <person name="Adams M.D."/>
            <person name="Myers E.W."/>
            <person name="Smith H.O."/>
            <person name="Venter J.C."/>
        </authorList>
    </citation>
    <scope>NUCLEOTIDE SEQUENCE [LARGE SCALE GENOMIC DNA]</scope>
</reference>
<reference key="4">
    <citation type="journal article" date="2004" name="Genome Res.">
        <title>The status, quality, and expansion of the NIH full-length cDNA project: the Mammalian Gene Collection (MGC).</title>
        <authorList>
            <consortium name="The MGC Project Team"/>
        </authorList>
    </citation>
    <scope>NUCLEOTIDE SEQUENCE [LARGE SCALE MRNA]</scope>
    <source>
        <strain>FVB/N-3</strain>
        <tissue>Mammary tumor</tissue>
    </source>
</reference>
<reference key="5">
    <citation type="journal article" date="1990" name="Differentiation">
        <title>Expression of inhibin alpha-subunit gene during mouse gametogenesis.</title>
        <authorList>
            <person name="Tone S."/>
            <person name="Katoh Y."/>
            <person name="Fujimoto H."/>
            <person name="Togashi S."/>
            <person name="Yanazawa M."/>
            <person name="Kato Y."/>
            <person name="Higashinakagawa T."/>
        </authorList>
    </citation>
    <scope>NUCLEOTIDE SEQUENCE [MRNA] OF 49-366</scope>
    <source>
        <strain>Swiss Webster</strain>
    </source>
</reference>
<reference key="6">
    <citation type="journal article" date="1992" name="Nature">
        <title>Alpha-inhibin is a tumour-suppressor gene with gonadal specificity in mice.</title>
        <authorList>
            <person name="Matzuk M.M."/>
            <person name="Finegold M.J."/>
            <person name="Su J.G.W."/>
            <person name="Hsueh A.J.W."/>
            <person name="Bradley A."/>
        </authorList>
    </citation>
    <scope>FUNCTION</scope>
    <scope>DISRUPTION PHENOTYPE</scope>
</reference>
<reference key="7">
    <citation type="journal article" date="1994" name="Proc. Natl. Acad. Sci. U.S.A.">
        <title>Development of cancer cachexia-like syndrome and adrenal tumors in inhibin-deficient mice.</title>
        <authorList>
            <person name="Matzuk M.M."/>
            <person name="Finegold M.J."/>
            <person name="Mather J.P."/>
            <person name="Krummen L."/>
            <person name="Lu H."/>
            <person name="Bradley A."/>
        </authorList>
    </citation>
    <scope>FUNCTION</scope>
</reference>
<reference key="8">
    <citation type="journal article" date="1996" name="Recent Prog. Horm. Res.">
        <title>Transgenic models to study the roles of inhibins and activins in reproduction, oncogenesis, and development.</title>
        <authorList>
            <person name="Matzuk M.M."/>
            <person name="Kumar T.R."/>
            <person name="Shou W."/>
            <person name="Coerver K.A."/>
            <person name="Lau A.L."/>
            <person name="Behringer R.R."/>
            <person name="Finegold M.J."/>
        </authorList>
    </citation>
    <scope>FUNCTION</scope>
    <scope>REVIEW</scope>
</reference>
<reference key="9">
    <citation type="journal article" date="2010" name="Cell">
        <title>A tissue-specific atlas of mouse protein phosphorylation and expression.</title>
        <authorList>
            <person name="Huttlin E.L."/>
            <person name="Jedrychowski M.P."/>
            <person name="Elias J.E."/>
            <person name="Goswami T."/>
            <person name="Rad R."/>
            <person name="Beausoleil S.A."/>
            <person name="Villen J."/>
            <person name="Haas W."/>
            <person name="Sowa M.E."/>
            <person name="Gygi S.P."/>
        </authorList>
    </citation>
    <scope>IDENTIFICATION BY MASS SPECTROMETRY [LARGE SCALE ANALYSIS]</scope>
    <source>
        <tissue>Testis</tissue>
    </source>
</reference>
<organism>
    <name type="scientific">Mus musculus</name>
    <name type="common">Mouse</name>
    <dbReference type="NCBI Taxonomy" id="10090"/>
    <lineage>
        <taxon>Eukaryota</taxon>
        <taxon>Metazoa</taxon>
        <taxon>Chordata</taxon>
        <taxon>Craniata</taxon>
        <taxon>Vertebrata</taxon>
        <taxon>Euteleostomi</taxon>
        <taxon>Mammalia</taxon>
        <taxon>Eutheria</taxon>
        <taxon>Euarchontoglires</taxon>
        <taxon>Glires</taxon>
        <taxon>Rodentia</taxon>
        <taxon>Myomorpha</taxon>
        <taxon>Muroidea</taxon>
        <taxon>Muridae</taxon>
        <taxon>Murinae</taxon>
        <taxon>Mus</taxon>
        <taxon>Mus</taxon>
    </lineage>
</organism>
<dbReference type="EMBL" id="X69618">
    <property type="protein sequence ID" value="CAA49324.1"/>
    <property type="molecule type" value="mRNA"/>
</dbReference>
<dbReference type="EMBL" id="M95525">
    <property type="protein sequence ID" value="AAA39314.1"/>
    <property type="molecule type" value="Genomic_DNA"/>
</dbReference>
<dbReference type="EMBL" id="M95526">
    <property type="protein sequence ID" value="AAA39314.1"/>
    <property type="status" value="JOINED"/>
    <property type="molecule type" value="Genomic_DNA"/>
</dbReference>
<dbReference type="EMBL" id="CH466548">
    <property type="protein sequence ID" value="EDL00422.1"/>
    <property type="molecule type" value="Genomic_DNA"/>
</dbReference>
<dbReference type="EMBL" id="BC056627">
    <property type="protein sequence ID" value="AAH56627.1"/>
    <property type="molecule type" value="mRNA"/>
</dbReference>
<dbReference type="EMBL" id="X55957">
    <property type="protein sequence ID" value="CAA39424.1"/>
    <property type="molecule type" value="mRNA"/>
</dbReference>
<dbReference type="CCDS" id="CCDS15078.1"/>
<dbReference type="PIR" id="JC1106">
    <property type="entry name" value="JC1106"/>
</dbReference>
<dbReference type="RefSeq" id="NP_034694.3">
    <property type="nucleotide sequence ID" value="NM_010564.5"/>
</dbReference>
<dbReference type="BioGRID" id="200761">
    <property type="interactions" value="2"/>
</dbReference>
<dbReference type="FunCoup" id="Q04997">
    <property type="interactions" value="304"/>
</dbReference>
<dbReference type="STRING" id="10090.ENSMUSP00000040310"/>
<dbReference type="GlyCosmos" id="Q04997">
    <property type="glycosylation" value="2 sites, No reported glycans"/>
</dbReference>
<dbReference type="GlyGen" id="Q04997">
    <property type="glycosylation" value="3 sites"/>
</dbReference>
<dbReference type="iPTMnet" id="Q04997"/>
<dbReference type="PhosphoSitePlus" id="Q04997"/>
<dbReference type="SwissPalm" id="Q04997"/>
<dbReference type="PaxDb" id="10090-ENSMUSP00000040310"/>
<dbReference type="ProteomicsDB" id="267138"/>
<dbReference type="Antibodypedia" id="4368">
    <property type="antibodies" value="882 antibodies from 44 providers"/>
</dbReference>
<dbReference type="DNASU" id="16322"/>
<dbReference type="Ensembl" id="ENSMUST00000037330.5">
    <property type="protein sequence ID" value="ENSMUSP00000040310.5"/>
    <property type="gene ID" value="ENSMUSG00000032968.5"/>
</dbReference>
<dbReference type="GeneID" id="16322"/>
<dbReference type="KEGG" id="mmu:16322"/>
<dbReference type="UCSC" id="uc007bps.1">
    <property type="organism name" value="mouse"/>
</dbReference>
<dbReference type="AGR" id="MGI:96569"/>
<dbReference type="CTD" id="3623"/>
<dbReference type="MGI" id="MGI:96569">
    <property type="gene designation" value="Inha"/>
</dbReference>
<dbReference type="VEuPathDB" id="HostDB:ENSMUSG00000032968"/>
<dbReference type="eggNOG" id="KOG3900">
    <property type="taxonomic scope" value="Eukaryota"/>
</dbReference>
<dbReference type="GeneTree" id="ENSGT00390000005935"/>
<dbReference type="HOGENOM" id="CLU_064515_0_0_1"/>
<dbReference type="InParanoid" id="Q04997"/>
<dbReference type="OMA" id="TYVFRPS"/>
<dbReference type="OrthoDB" id="9929039at2759"/>
<dbReference type="PhylomeDB" id="Q04997"/>
<dbReference type="TreeFam" id="TF331531"/>
<dbReference type="Reactome" id="R-MMU-1502540">
    <property type="pathway name" value="Signaling by Activin"/>
</dbReference>
<dbReference type="Reactome" id="R-MMU-201451">
    <property type="pathway name" value="Signaling by BMP"/>
</dbReference>
<dbReference type="Reactome" id="R-MMU-209822">
    <property type="pathway name" value="Glycoprotein hormones"/>
</dbReference>
<dbReference type="Reactome" id="R-MMU-9839406">
    <property type="pathway name" value="TGFBR3 regulates activin signaling"/>
</dbReference>
<dbReference type="BioGRID-ORCS" id="16322">
    <property type="hits" value="4 hits in 78 CRISPR screens"/>
</dbReference>
<dbReference type="ChiTaRS" id="Inha">
    <property type="organism name" value="mouse"/>
</dbReference>
<dbReference type="PRO" id="PR:Q04997"/>
<dbReference type="Proteomes" id="UP000000589">
    <property type="component" value="Chromosome 1"/>
</dbReference>
<dbReference type="RNAct" id="Q04997">
    <property type="molecule type" value="protein"/>
</dbReference>
<dbReference type="Bgee" id="ENSMUSG00000032968">
    <property type="expression patterns" value="Expressed in cumulus cell and 139 other cell types or tissues"/>
</dbReference>
<dbReference type="GO" id="GO:0043512">
    <property type="term" value="C:inhibin A complex"/>
    <property type="evidence" value="ECO:0007669"/>
    <property type="project" value="Ensembl"/>
</dbReference>
<dbReference type="GO" id="GO:0043513">
    <property type="term" value="C:inhibin B complex"/>
    <property type="evidence" value="ECO:0007669"/>
    <property type="project" value="Ensembl"/>
</dbReference>
<dbReference type="GO" id="GO:0034673">
    <property type="term" value="C:inhibin-betaglycan-ActRII complex"/>
    <property type="evidence" value="ECO:0007669"/>
    <property type="project" value="Ensembl"/>
</dbReference>
<dbReference type="GO" id="GO:0043025">
    <property type="term" value="C:neuronal cell body"/>
    <property type="evidence" value="ECO:0007669"/>
    <property type="project" value="Ensembl"/>
</dbReference>
<dbReference type="GO" id="GO:0001917">
    <property type="term" value="C:photoreceptor inner segment"/>
    <property type="evidence" value="ECO:0007669"/>
    <property type="project" value="Ensembl"/>
</dbReference>
<dbReference type="GO" id="GO:0001750">
    <property type="term" value="C:photoreceptor outer segment"/>
    <property type="evidence" value="ECO:0007669"/>
    <property type="project" value="Ensembl"/>
</dbReference>
<dbReference type="GO" id="GO:0008083">
    <property type="term" value="F:growth factor activity"/>
    <property type="evidence" value="ECO:0007669"/>
    <property type="project" value="UniProtKB-KW"/>
</dbReference>
<dbReference type="GO" id="GO:0005179">
    <property type="term" value="F:hormone activity"/>
    <property type="evidence" value="ECO:0007669"/>
    <property type="project" value="UniProtKB-KW"/>
</dbReference>
<dbReference type="GO" id="GO:0034711">
    <property type="term" value="F:inhibin binding"/>
    <property type="evidence" value="ECO:0007669"/>
    <property type="project" value="Ensembl"/>
</dbReference>
<dbReference type="GO" id="GO:0044877">
    <property type="term" value="F:protein-containing complex binding"/>
    <property type="evidence" value="ECO:0007669"/>
    <property type="project" value="Ensembl"/>
</dbReference>
<dbReference type="GO" id="GO:0042541">
    <property type="term" value="P:hemoglobin biosynthetic process"/>
    <property type="evidence" value="ECO:0000250"/>
    <property type="project" value="UniProtKB"/>
</dbReference>
<dbReference type="GO" id="GO:0008584">
    <property type="term" value="P:male gonad development"/>
    <property type="evidence" value="ECO:0007669"/>
    <property type="project" value="Ensembl"/>
</dbReference>
<dbReference type="GO" id="GO:0046882">
    <property type="term" value="P:negative regulation of follicle-stimulating hormone secretion"/>
    <property type="evidence" value="ECO:0007669"/>
    <property type="project" value="Ensembl"/>
</dbReference>
<dbReference type="GO" id="GO:0001541">
    <property type="term" value="P:ovarian follicle development"/>
    <property type="evidence" value="ECO:0007669"/>
    <property type="project" value="Ensembl"/>
</dbReference>
<dbReference type="GO" id="GO:0051726">
    <property type="term" value="P:regulation of cell cycle"/>
    <property type="evidence" value="ECO:0007669"/>
    <property type="project" value="Ensembl"/>
</dbReference>
<dbReference type="GO" id="GO:0042127">
    <property type="term" value="P:regulation of cell population proliferation"/>
    <property type="evidence" value="ECO:0007669"/>
    <property type="project" value="Ensembl"/>
</dbReference>
<dbReference type="FunFam" id="2.10.90.10:FF:000024">
    <property type="entry name" value="Inhibin alpha chain"/>
    <property type="match status" value="1"/>
</dbReference>
<dbReference type="Gene3D" id="2.10.90.10">
    <property type="entry name" value="Cystine-knot cytokines"/>
    <property type="match status" value="1"/>
</dbReference>
<dbReference type="InterPro" id="IPR029034">
    <property type="entry name" value="Cystine-knot_cytokine"/>
</dbReference>
<dbReference type="InterPro" id="IPR017175">
    <property type="entry name" value="Inhibin_asu"/>
</dbReference>
<dbReference type="InterPro" id="IPR001839">
    <property type="entry name" value="TGF-b_C"/>
</dbReference>
<dbReference type="InterPro" id="IPR015615">
    <property type="entry name" value="TGF-beta-rel"/>
</dbReference>
<dbReference type="InterPro" id="IPR017948">
    <property type="entry name" value="TGFb_CS"/>
</dbReference>
<dbReference type="PANTHER" id="PTHR11848:SF117">
    <property type="entry name" value="INHIBIN ALPHA CHAIN"/>
    <property type="match status" value="1"/>
</dbReference>
<dbReference type="PANTHER" id="PTHR11848">
    <property type="entry name" value="TGF-BETA FAMILY"/>
    <property type="match status" value="1"/>
</dbReference>
<dbReference type="Pfam" id="PF00019">
    <property type="entry name" value="TGF_beta"/>
    <property type="match status" value="1"/>
</dbReference>
<dbReference type="PIRSF" id="PIRSF037328">
    <property type="entry name" value="Inhibin_alpha_subunit"/>
    <property type="match status" value="1"/>
</dbReference>
<dbReference type="PRINTS" id="PR00669">
    <property type="entry name" value="INHIBINA"/>
</dbReference>
<dbReference type="SMART" id="SM00204">
    <property type="entry name" value="TGFB"/>
    <property type="match status" value="1"/>
</dbReference>
<dbReference type="SUPFAM" id="SSF57501">
    <property type="entry name" value="Cystine-knot cytokines"/>
    <property type="match status" value="1"/>
</dbReference>
<dbReference type="PROSITE" id="PS00250">
    <property type="entry name" value="TGF_BETA_1"/>
    <property type="match status" value="1"/>
</dbReference>
<dbReference type="PROSITE" id="PS51362">
    <property type="entry name" value="TGF_BETA_2"/>
    <property type="match status" value="1"/>
</dbReference>
<evidence type="ECO:0000250" key="1"/>
<evidence type="ECO:0000250" key="2">
    <source>
        <dbReference type="UniProtKB" id="P05111"/>
    </source>
</evidence>
<evidence type="ECO:0000250" key="3">
    <source>
        <dbReference type="UniProtKB" id="P08476"/>
    </source>
</evidence>
<evidence type="ECO:0000250" key="4">
    <source>
        <dbReference type="UniProtKB" id="P17490"/>
    </source>
</evidence>
<evidence type="ECO:0000255" key="5"/>
<evidence type="ECO:0000269" key="6">
    <source>
    </source>
</evidence>
<evidence type="ECO:0000269" key="7">
    <source>
    </source>
</evidence>
<evidence type="ECO:0000269" key="8">
    <source>
    </source>
</evidence>
<evidence type="ECO:0000305" key="9"/>
<keyword id="KW-0165">Cleavage on pair of basic residues</keyword>
<keyword id="KW-1015">Disulfide bond</keyword>
<keyword id="KW-0325">Glycoprotein</keyword>
<keyword id="KW-0339">Growth factor</keyword>
<keyword id="KW-0372">Hormone</keyword>
<keyword id="KW-1185">Reference proteome</keyword>
<keyword id="KW-0964">Secreted</keyword>
<keyword id="KW-0732">Signal</keyword>
<proteinExistence type="evidence at protein level"/>
<name>INHA_MOUSE</name>
<gene>
    <name type="primary">Inha</name>
</gene>